<accession>Q9CXT7</accession>
<accession>Q3THT5</accession>
<accession>Q8VDU8</accession>
<gene>
    <name type="primary">Tmem192</name>
</gene>
<reference key="1">
    <citation type="journal article" date="2005" name="Science">
        <title>The transcriptional landscape of the mammalian genome.</title>
        <authorList>
            <person name="Carninci P."/>
            <person name="Kasukawa T."/>
            <person name="Katayama S."/>
            <person name="Gough J."/>
            <person name="Frith M.C."/>
            <person name="Maeda N."/>
            <person name="Oyama R."/>
            <person name="Ravasi T."/>
            <person name="Lenhard B."/>
            <person name="Wells C."/>
            <person name="Kodzius R."/>
            <person name="Shimokawa K."/>
            <person name="Bajic V.B."/>
            <person name="Brenner S.E."/>
            <person name="Batalov S."/>
            <person name="Forrest A.R."/>
            <person name="Zavolan M."/>
            <person name="Davis M.J."/>
            <person name="Wilming L.G."/>
            <person name="Aidinis V."/>
            <person name="Allen J.E."/>
            <person name="Ambesi-Impiombato A."/>
            <person name="Apweiler R."/>
            <person name="Aturaliya R.N."/>
            <person name="Bailey T.L."/>
            <person name="Bansal M."/>
            <person name="Baxter L."/>
            <person name="Beisel K.W."/>
            <person name="Bersano T."/>
            <person name="Bono H."/>
            <person name="Chalk A.M."/>
            <person name="Chiu K.P."/>
            <person name="Choudhary V."/>
            <person name="Christoffels A."/>
            <person name="Clutterbuck D.R."/>
            <person name="Crowe M.L."/>
            <person name="Dalla E."/>
            <person name="Dalrymple B.P."/>
            <person name="de Bono B."/>
            <person name="Della Gatta G."/>
            <person name="di Bernardo D."/>
            <person name="Down T."/>
            <person name="Engstrom P."/>
            <person name="Fagiolini M."/>
            <person name="Faulkner G."/>
            <person name="Fletcher C.F."/>
            <person name="Fukushima T."/>
            <person name="Furuno M."/>
            <person name="Futaki S."/>
            <person name="Gariboldi M."/>
            <person name="Georgii-Hemming P."/>
            <person name="Gingeras T.R."/>
            <person name="Gojobori T."/>
            <person name="Green R.E."/>
            <person name="Gustincich S."/>
            <person name="Harbers M."/>
            <person name="Hayashi Y."/>
            <person name="Hensch T.K."/>
            <person name="Hirokawa N."/>
            <person name="Hill D."/>
            <person name="Huminiecki L."/>
            <person name="Iacono M."/>
            <person name="Ikeo K."/>
            <person name="Iwama A."/>
            <person name="Ishikawa T."/>
            <person name="Jakt M."/>
            <person name="Kanapin A."/>
            <person name="Katoh M."/>
            <person name="Kawasawa Y."/>
            <person name="Kelso J."/>
            <person name="Kitamura H."/>
            <person name="Kitano H."/>
            <person name="Kollias G."/>
            <person name="Krishnan S.P."/>
            <person name="Kruger A."/>
            <person name="Kummerfeld S.K."/>
            <person name="Kurochkin I.V."/>
            <person name="Lareau L.F."/>
            <person name="Lazarevic D."/>
            <person name="Lipovich L."/>
            <person name="Liu J."/>
            <person name="Liuni S."/>
            <person name="McWilliam S."/>
            <person name="Madan Babu M."/>
            <person name="Madera M."/>
            <person name="Marchionni L."/>
            <person name="Matsuda H."/>
            <person name="Matsuzawa S."/>
            <person name="Miki H."/>
            <person name="Mignone F."/>
            <person name="Miyake S."/>
            <person name="Morris K."/>
            <person name="Mottagui-Tabar S."/>
            <person name="Mulder N."/>
            <person name="Nakano N."/>
            <person name="Nakauchi H."/>
            <person name="Ng P."/>
            <person name="Nilsson R."/>
            <person name="Nishiguchi S."/>
            <person name="Nishikawa S."/>
            <person name="Nori F."/>
            <person name="Ohara O."/>
            <person name="Okazaki Y."/>
            <person name="Orlando V."/>
            <person name="Pang K.C."/>
            <person name="Pavan W.J."/>
            <person name="Pavesi G."/>
            <person name="Pesole G."/>
            <person name="Petrovsky N."/>
            <person name="Piazza S."/>
            <person name="Reed J."/>
            <person name="Reid J.F."/>
            <person name="Ring B.Z."/>
            <person name="Ringwald M."/>
            <person name="Rost B."/>
            <person name="Ruan Y."/>
            <person name="Salzberg S.L."/>
            <person name="Sandelin A."/>
            <person name="Schneider C."/>
            <person name="Schoenbach C."/>
            <person name="Sekiguchi K."/>
            <person name="Semple C.A."/>
            <person name="Seno S."/>
            <person name="Sessa L."/>
            <person name="Sheng Y."/>
            <person name="Shibata Y."/>
            <person name="Shimada H."/>
            <person name="Shimada K."/>
            <person name="Silva D."/>
            <person name="Sinclair B."/>
            <person name="Sperling S."/>
            <person name="Stupka E."/>
            <person name="Sugiura K."/>
            <person name="Sultana R."/>
            <person name="Takenaka Y."/>
            <person name="Taki K."/>
            <person name="Tammoja K."/>
            <person name="Tan S.L."/>
            <person name="Tang S."/>
            <person name="Taylor M.S."/>
            <person name="Tegner J."/>
            <person name="Teichmann S.A."/>
            <person name="Ueda H.R."/>
            <person name="van Nimwegen E."/>
            <person name="Verardo R."/>
            <person name="Wei C.L."/>
            <person name="Yagi K."/>
            <person name="Yamanishi H."/>
            <person name="Zabarovsky E."/>
            <person name="Zhu S."/>
            <person name="Zimmer A."/>
            <person name="Hide W."/>
            <person name="Bult C."/>
            <person name="Grimmond S.M."/>
            <person name="Teasdale R.D."/>
            <person name="Liu E.T."/>
            <person name="Brusic V."/>
            <person name="Quackenbush J."/>
            <person name="Wahlestedt C."/>
            <person name="Mattick J.S."/>
            <person name="Hume D.A."/>
            <person name="Kai C."/>
            <person name="Sasaki D."/>
            <person name="Tomaru Y."/>
            <person name="Fukuda S."/>
            <person name="Kanamori-Katayama M."/>
            <person name="Suzuki M."/>
            <person name="Aoki J."/>
            <person name="Arakawa T."/>
            <person name="Iida J."/>
            <person name="Imamura K."/>
            <person name="Itoh M."/>
            <person name="Kato T."/>
            <person name="Kawaji H."/>
            <person name="Kawagashira N."/>
            <person name="Kawashima T."/>
            <person name="Kojima M."/>
            <person name="Kondo S."/>
            <person name="Konno H."/>
            <person name="Nakano K."/>
            <person name="Ninomiya N."/>
            <person name="Nishio T."/>
            <person name="Okada M."/>
            <person name="Plessy C."/>
            <person name="Shibata K."/>
            <person name="Shiraki T."/>
            <person name="Suzuki S."/>
            <person name="Tagami M."/>
            <person name="Waki K."/>
            <person name="Watahiki A."/>
            <person name="Okamura-Oho Y."/>
            <person name="Suzuki H."/>
            <person name="Kawai J."/>
            <person name="Hayashizaki Y."/>
        </authorList>
    </citation>
    <scope>NUCLEOTIDE SEQUENCE [LARGE SCALE MRNA] (ISOFORM 1)</scope>
    <source>
        <strain>BALB/cJ</strain>
        <strain>C57BL/6J</strain>
        <tissue>Corpora quadrigemina</tissue>
        <tissue>Head</tissue>
    </source>
</reference>
<reference key="2">
    <citation type="journal article" date="2004" name="Genome Res.">
        <title>The status, quality, and expansion of the NIH full-length cDNA project: the Mammalian Gene Collection (MGC).</title>
        <authorList>
            <consortium name="The MGC Project Team"/>
        </authorList>
    </citation>
    <scope>NUCLEOTIDE SEQUENCE [LARGE SCALE MRNA] (ISOFORM 2)</scope>
    <source>
        <strain>FVB/N</strain>
        <tissue>Mammary tumor</tissue>
    </source>
</reference>
<reference key="3">
    <citation type="journal article" date="2009" name="Immunity">
        <title>The phagosomal proteome in interferon-gamma-activated macrophages.</title>
        <authorList>
            <person name="Trost M."/>
            <person name="English L."/>
            <person name="Lemieux S."/>
            <person name="Courcelles M."/>
            <person name="Desjardins M."/>
            <person name="Thibault P."/>
        </authorList>
    </citation>
    <scope>PHOSPHORYLATION [LARGE SCALE ANALYSIS] AT SER-17</scope>
    <scope>IDENTIFICATION BY MASS SPECTROMETRY [LARGE SCALE ANALYSIS]</scope>
</reference>
<sequence length="266" mass="30336">MAAAGRLEDSSLDILQSMDDDPLLDTQPLPHHSLQAQFRPRFHPLPTVIIANLLLLIHVVFVVLAFLTGVPCLYPNPTEDKCPENYTSPLKVQTAIILGKLILWILHLLFERYVQYHHRKVRSRGYSQIYRSTRHLKTLALTIHSSGNTALLLLLCVQHSFPEPSKLYLELILAVLALELICSLSCLILYIVKIRRFNRAKPLPDVLEEEKIYAYPSNTASETGFRTVSSLEEIVEKQEDIIVYLKRHNALLSKRLLELATQPART</sequence>
<name>TM192_MOUSE</name>
<feature type="chain" id="PRO_0000311268" description="Transmembrane protein 192">
    <location>
        <begin position="1"/>
        <end position="266"/>
    </location>
</feature>
<feature type="topological domain" description="Cytoplasmic" evidence="3">
    <location>
        <begin position="1"/>
        <end position="46"/>
    </location>
</feature>
<feature type="transmembrane region" description="Helical" evidence="3">
    <location>
        <begin position="47"/>
        <end position="67"/>
    </location>
</feature>
<feature type="topological domain" description="Lumenal" evidence="3">
    <location>
        <begin position="68"/>
        <end position="89"/>
    </location>
</feature>
<feature type="transmembrane region" description="Helical" evidence="3">
    <location>
        <begin position="90"/>
        <end position="110"/>
    </location>
</feature>
<feature type="topological domain" description="Cytoplasmic" evidence="3">
    <location>
        <begin position="111"/>
        <end position="137"/>
    </location>
</feature>
<feature type="transmembrane region" description="Helical" evidence="3">
    <location>
        <begin position="138"/>
        <end position="158"/>
    </location>
</feature>
<feature type="topological domain" description="Lumenal" evidence="3">
    <location>
        <begin position="159"/>
        <end position="171"/>
    </location>
</feature>
<feature type="transmembrane region" description="Helical" evidence="3">
    <location>
        <begin position="172"/>
        <end position="192"/>
    </location>
</feature>
<feature type="topological domain" description="Cytoplasmic" evidence="3">
    <location>
        <begin position="193"/>
        <end position="266"/>
    </location>
</feature>
<feature type="modified residue" description="Phosphoserine" evidence="6">
    <location>
        <position position="17"/>
    </location>
</feature>
<feature type="modified residue" description="Phosphotyrosine" evidence="2">
    <location>
        <position position="213"/>
    </location>
</feature>
<feature type="modified residue" description="Phosphoserine" evidence="2">
    <location>
        <position position="229"/>
    </location>
</feature>
<feature type="modified residue" description="Phosphoserine" evidence="2">
    <location>
        <position position="230"/>
    </location>
</feature>
<feature type="splice variant" id="VSP_029503" description="In isoform 2." evidence="4">
    <location>
        <begin position="147"/>
        <end position="191"/>
    </location>
</feature>
<feature type="sequence conflict" description="In Ref. 1; BAE40111." evidence="5" ref="1">
    <original>E</original>
    <variation>K</variation>
    <location>
        <position position="111"/>
    </location>
</feature>
<keyword id="KW-0025">Alternative splicing</keyword>
<keyword id="KW-0967">Endosome</keyword>
<keyword id="KW-0458">Lysosome</keyword>
<keyword id="KW-0472">Membrane</keyword>
<keyword id="KW-0597">Phosphoprotein</keyword>
<keyword id="KW-1185">Reference proteome</keyword>
<keyword id="KW-0812">Transmembrane</keyword>
<keyword id="KW-1133">Transmembrane helix</keyword>
<dbReference type="EMBL" id="AK013998">
    <property type="protein sequence ID" value="BAB29107.1"/>
    <property type="molecule type" value="mRNA"/>
</dbReference>
<dbReference type="EMBL" id="AK046181">
    <property type="protein sequence ID" value="BAC32622.1"/>
    <property type="molecule type" value="mRNA"/>
</dbReference>
<dbReference type="EMBL" id="AK168146">
    <property type="protein sequence ID" value="BAE40111.1"/>
    <property type="molecule type" value="mRNA"/>
</dbReference>
<dbReference type="EMBL" id="BC020157">
    <property type="protein sequence ID" value="AAH20157.1"/>
    <property type="molecule type" value="mRNA"/>
</dbReference>
<dbReference type="CCDS" id="CCDS22329.1">
    <molecule id="Q9CXT7-1"/>
</dbReference>
<dbReference type="CCDS" id="CCDS52559.1">
    <molecule id="Q9CXT7-2"/>
</dbReference>
<dbReference type="RefSeq" id="NP_001157219.1">
    <molecule id="Q9CXT7-2"/>
    <property type="nucleotide sequence ID" value="NM_001163747.1"/>
</dbReference>
<dbReference type="RefSeq" id="NP_082703.1">
    <molecule id="Q9CXT7-1"/>
    <property type="nucleotide sequence ID" value="NM_028427.3"/>
</dbReference>
<dbReference type="SMR" id="Q9CXT7"/>
<dbReference type="FunCoup" id="Q9CXT7">
    <property type="interactions" value="2648"/>
</dbReference>
<dbReference type="STRING" id="10090.ENSMUSP00000026595"/>
<dbReference type="iPTMnet" id="Q9CXT7"/>
<dbReference type="PhosphoSitePlus" id="Q9CXT7"/>
<dbReference type="PaxDb" id="10090-ENSMUSP00000026595"/>
<dbReference type="PeptideAtlas" id="Q9CXT7"/>
<dbReference type="ProteomicsDB" id="259219">
    <molecule id="Q9CXT7-1"/>
</dbReference>
<dbReference type="ProteomicsDB" id="259220">
    <molecule id="Q9CXT7-2"/>
</dbReference>
<dbReference type="Pumba" id="Q9CXT7"/>
<dbReference type="Antibodypedia" id="7685">
    <property type="antibodies" value="89 antibodies from 25 providers"/>
</dbReference>
<dbReference type="Ensembl" id="ENSMUST00000026595.13">
    <molecule id="Q9CXT7-1"/>
    <property type="protein sequence ID" value="ENSMUSP00000026595.6"/>
    <property type="gene ID" value="ENSMUSG00000025521.16"/>
</dbReference>
<dbReference type="Ensembl" id="ENSMUST00000079896.9">
    <molecule id="Q9CXT7-2"/>
    <property type="protein sequence ID" value="ENSMUSP00000078819.8"/>
    <property type="gene ID" value="ENSMUSG00000025521.16"/>
</dbReference>
<dbReference type="GeneID" id="73067"/>
<dbReference type="KEGG" id="mmu:73067"/>
<dbReference type="UCSC" id="uc009lvb.3">
    <molecule id="Q9CXT7-1"/>
    <property type="organism name" value="mouse"/>
</dbReference>
<dbReference type="UCSC" id="uc009lvc.3">
    <molecule id="Q9CXT7-2"/>
    <property type="organism name" value="mouse"/>
</dbReference>
<dbReference type="AGR" id="MGI:1920317"/>
<dbReference type="CTD" id="201931"/>
<dbReference type="MGI" id="MGI:1920317">
    <property type="gene designation" value="Tmem192"/>
</dbReference>
<dbReference type="VEuPathDB" id="HostDB:ENSMUSG00000025521"/>
<dbReference type="eggNOG" id="ENOG502QWR8">
    <property type="taxonomic scope" value="Eukaryota"/>
</dbReference>
<dbReference type="GeneTree" id="ENSGT00390000013749"/>
<dbReference type="HOGENOM" id="CLU_086771_0_0_1"/>
<dbReference type="InParanoid" id="Q9CXT7"/>
<dbReference type="OMA" id="HGCYIDK"/>
<dbReference type="OrthoDB" id="6277625at2759"/>
<dbReference type="PhylomeDB" id="Q9CXT7"/>
<dbReference type="TreeFam" id="TF323773"/>
<dbReference type="BioGRID-ORCS" id="73067">
    <property type="hits" value="5 hits in 77 CRISPR screens"/>
</dbReference>
<dbReference type="PRO" id="PR:Q9CXT7"/>
<dbReference type="Proteomes" id="UP000000589">
    <property type="component" value="Chromosome 8"/>
</dbReference>
<dbReference type="RNAct" id="Q9CXT7">
    <property type="molecule type" value="protein"/>
</dbReference>
<dbReference type="Bgee" id="ENSMUSG00000025521">
    <property type="expression patterns" value="Expressed in right kidney and 231 other cell types or tissues"/>
</dbReference>
<dbReference type="ExpressionAtlas" id="Q9CXT7">
    <property type="expression patterns" value="baseline and differential"/>
</dbReference>
<dbReference type="GO" id="GO:0005770">
    <property type="term" value="C:late endosome"/>
    <property type="evidence" value="ECO:0007669"/>
    <property type="project" value="UniProtKB-SubCell"/>
</dbReference>
<dbReference type="GO" id="GO:0005765">
    <property type="term" value="C:lysosomal membrane"/>
    <property type="evidence" value="ECO:0007669"/>
    <property type="project" value="UniProtKB-SubCell"/>
</dbReference>
<dbReference type="GO" id="GO:0005764">
    <property type="term" value="C:lysosome"/>
    <property type="evidence" value="ECO:0000314"/>
    <property type="project" value="MGI"/>
</dbReference>
<dbReference type="GO" id="GO:0005654">
    <property type="term" value="C:nucleoplasm"/>
    <property type="evidence" value="ECO:0007669"/>
    <property type="project" value="Ensembl"/>
</dbReference>
<dbReference type="GO" id="GO:0048471">
    <property type="term" value="C:perinuclear region of cytoplasm"/>
    <property type="evidence" value="ECO:0007669"/>
    <property type="project" value="Ensembl"/>
</dbReference>
<dbReference type="GO" id="GO:0042803">
    <property type="term" value="F:protein homodimerization activity"/>
    <property type="evidence" value="ECO:0007669"/>
    <property type="project" value="Ensembl"/>
</dbReference>
<dbReference type="InterPro" id="IPR029399">
    <property type="entry name" value="TMEM192"/>
</dbReference>
<dbReference type="PANTHER" id="PTHR31592">
    <property type="entry name" value="TRANSMEMBRANE PROTEIN 192"/>
    <property type="match status" value="1"/>
</dbReference>
<dbReference type="PANTHER" id="PTHR31592:SF1">
    <property type="entry name" value="TRANSMEMBRANE PROTEIN 192"/>
    <property type="match status" value="1"/>
</dbReference>
<dbReference type="Pfam" id="PF14802">
    <property type="entry name" value="TMEM192"/>
    <property type="match status" value="1"/>
</dbReference>
<organism>
    <name type="scientific">Mus musculus</name>
    <name type="common">Mouse</name>
    <dbReference type="NCBI Taxonomy" id="10090"/>
    <lineage>
        <taxon>Eukaryota</taxon>
        <taxon>Metazoa</taxon>
        <taxon>Chordata</taxon>
        <taxon>Craniata</taxon>
        <taxon>Vertebrata</taxon>
        <taxon>Euteleostomi</taxon>
        <taxon>Mammalia</taxon>
        <taxon>Eutheria</taxon>
        <taxon>Euarchontoglires</taxon>
        <taxon>Glires</taxon>
        <taxon>Rodentia</taxon>
        <taxon>Myomorpha</taxon>
        <taxon>Muroidea</taxon>
        <taxon>Muridae</taxon>
        <taxon>Murinae</taxon>
        <taxon>Mus</taxon>
        <taxon>Mus</taxon>
    </lineage>
</organism>
<comment type="subunit">
    <text evidence="1">Homodimer.</text>
</comment>
<comment type="subcellular location">
    <subcellularLocation>
        <location evidence="2">Lysosome membrane</location>
        <topology evidence="2">Multi-pass membrane protein</topology>
    </subcellularLocation>
    <subcellularLocation>
        <location evidence="2">Late endosome</location>
    </subcellularLocation>
</comment>
<comment type="alternative products">
    <event type="alternative splicing"/>
    <isoform>
        <id>Q9CXT7-1</id>
        <name>1</name>
        <sequence type="displayed"/>
    </isoform>
    <isoform>
        <id>Q9CXT7-2</id>
        <name>2</name>
        <sequence type="described" ref="VSP_029503"/>
    </isoform>
</comment>
<comment type="similarity">
    <text evidence="5">Belongs to the TMEM192 family.</text>
</comment>
<evidence type="ECO:0000250" key="1"/>
<evidence type="ECO:0000250" key="2">
    <source>
        <dbReference type="UniProtKB" id="Q8IY95"/>
    </source>
</evidence>
<evidence type="ECO:0000255" key="3"/>
<evidence type="ECO:0000303" key="4">
    <source>
    </source>
</evidence>
<evidence type="ECO:0000305" key="5"/>
<evidence type="ECO:0007744" key="6">
    <source>
    </source>
</evidence>
<proteinExistence type="evidence at protein level"/>
<protein>
    <recommendedName>
        <fullName>Transmembrane protein 192</fullName>
    </recommendedName>
</protein>